<sequence>MTDMWDVRITDTSLRDGSHHKRHQFTKDEVGAIVAALDAAGVPVIEVTHGDGLGGSSFNYGFSKTPEQELIKLAAATAKEARIAFLMLPGVGTKDDIKEARDNGGSICRIATHCTEADVSIQHFGLARELGLETVGFLMMAHTIAPEKLAAQARIMADAGCQCVYVVDSAGALVLDGVADRVSALVAELGEDAQVGFHGHENLGLGVANSVAAVRAGAKQIDGSCRRFGAGAGNAPVEALIGVFDKIGVKTGIDFFDIADAAEDVVRPAMPAECLLDRNALIMGYSGVYSSFLKHAVRQAERYGVPASALLHRAGQRKLIGGQEDQLIDIALEIKRELDSGAAVTH</sequence>
<gene>
    <name evidence="1" type="primary">hsaF</name>
    <name type="ordered locus">JTY_3599</name>
</gene>
<dbReference type="EC" id="4.1.3.43" evidence="1"/>
<dbReference type="EC" id="4.1.3.39" evidence="2"/>
<dbReference type="EMBL" id="AP010918">
    <property type="protein sequence ID" value="BAH27871.1"/>
    <property type="molecule type" value="Genomic_DNA"/>
</dbReference>
<dbReference type="SMR" id="C1AHZ2"/>
<dbReference type="KEGG" id="mbt:JTY_3599"/>
<dbReference type="HOGENOM" id="CLU_049173_0_0_11"/>
<dbReference type="GO" id="GO:0003852">
    <property type="term" value="F:2-isopropylmalate synthase activity"/>
    <property type="evidence" value="ECO:0007669"/>
    <property type="project" value="TreeGrafter"/>
</dbReference>
<dbReference type="GO" id="GO:0008701">
    <property type="term" value="F:4-hydroxy-2-oxovalerate aldolase activity"/>
    <property type="evidence" value="ECO:0007669"/>
    <property type="project" value="UniProtKB-UniRule"/>
</dbReference>
<dbReference type="GO" id="GO:0030145">
    <property type="term" value="F:manganese ion binding"/>
    <property type="evidence" value="ECO:0007669"/>
    <property type="project" value="UniProtKB-UniRule"/>
</dbReference>
<dbReference type="GO" id="GO:0009056">
    <property type="term" value="P:catabolic process"/>
    <property type="evidence" value="ECO:0007669"/>
    <property type="project" value="UniProtKB-KW"/>
</dbReference>
<dbReference type="GO" id="GO:0009098">
    <property type="term" value="P:L-leucine biosynthetic process"/>
    <property type="evidence" value="ECO:0007669"/>
    <property type="project" value="TreeGrafter"/>
</dbReference>
<dbReference type="CDD" id="cd07943">
    <property type="entry name" value="DRE_TIM_HOA"/>
    <property type="match status" value="1"/>
</dbReference>
<dbReference type="FunFam" id="1.10.8.60:FF:000042">
    <property type="entry name" value="4-hydroxy-2-oxovalerate aldolase"/>
    <property type="match status" value="1"/>
</dbReference>
<dbReference type="FunFam" id="3.20.20.70:FF:000072">
    <property type="entry name" value="4-hydroxy-2-oxovalerate aldolase"/>
    <property type="match status" value="1"/>
</dbReference>
<dbReference type="Gene3D" id="1.10.8.60">
    <property type="match status" value="1"/>
</dbReference>
<dbReference type="Gene3D" id="3.20.20.70">
    <property type="entry name" value="Aldolase class I"/>
    <property type="match status" value="1"/>
</dbReference>
<dbReference type="HAMAP" id="MF_01656">
    <property type="entry name" value="HOA"/>
    <property type="match status" value="1"/>
</dbReference>
<dbReference type="InterPro" id="IPR050073">
    <property type="entry name" value="2-IPM_HCS-like"/>
</dbReference>
<dbReference type="InterPro" id="IPR017629">
    <property type="entry name" value="4OH_2_O-val_aldolase"/>
</dbReference>
<dbReference type="InterPro" id="IPR013785">
    <property type="entry name" value="Aldolase_TIM"/>
</dbReference>
<dbReference type="InterPro" id="IPR012425">
    <property type="entry name" value="DmpG_comm"/>
</dbReference>
<dbReference type="InterPro" id="IPR035685">
    <property type="entry name" value="DRE_TIM_HOA"/>
</dbReference>
<dbReference type="InterPro" id="IPR000891">
    <property type="entry name" value="PYR_CT"/>
</dbReference>
<dbReference type="NCBIfam" id="TIGR03217">
    <property type="entry name" value="4OH_2_O_val_ald"/>
    <property type="match status" value="1"/>
</dbReference>
<dbReference type="NCBIfam" id="NF006049">
    <property type="entry name" value="PRK08195.1"/>
    <property type="match status" value="1"/>
</dbReference>
<dbReference type="PANTHER" id="PTHR10277:SF9">
    <property type="entry name" value="2-ISOPROPYLMALATE SYNTHASE 1, CHLOROPLASTIC-RELATED"/>
    <property type="match status" value="1"/>
</dbReference>
<dbReference type="PANTHER" id="PTHR10277">
    <property type="entry name" value="HOMOCITRATE SYNTHASE-RELATED"/>
    <property type="match status" value="1"/>
</dbReference>
<dbReference type="Pfam" id="PF07836">
    <property type="entry name" value="DmpG_comm"/>
    <property type="match status" value="1"/>
</dbReference>
<dbReference type="Pfam" id="PF00682">
    <property type="entry name" value="HMGL-like"/>
    <property type="match status" value="1"/>
</dbReference>
<dbReference type="SUPFAM" id="SSF51569">
    <property type="entry name" value="Aldolase"/>
    <property type="match status" value="1"/>
</dbReference>
<dbReference type="SUPFAM" id="SSF89000">
    <property type="entry name" value="post-HMGL domain-like"/>
    <property type="match status" value="1"/>
</dbReference>
<dbReference type="PROSITE" id="PS50991">
    <property type="entry name" value="PYR_CT"/>
    <property type="match status" value="1"/>
</dbReference>
<evidence type="ECO:0000250" key="1">
    <source>
        <dbReference type="UniProtKB" id="P9WMK5"/>
    </source>
</evidence>
<evidence type="ECO:0000255" key="2">
    <source>
        <dbReference type="HAMAP-Rule" id="MF_01656"/>
    </source>
</evidence>
<organism>
    <name type="scientific">Mycobacterium bovis (strain BCG / Tokyo 172 / ATCC 35737 / TMC 1019)</name>
    <dbReference type="NCBI Taxonomy" id="561275"/>
    <lineage>
        <taxon>Bacteria</taxon>
        <taxon>Bacillati</taxon>
        <taxon>Actinomycetota</taxon>
        <taxon>Actinomycetes</taxon>
        <taxon>Mycobacteriales</taxon>
        <taxon>Mycobacteriaceae</taxon>
        <taxon>Mycobacterium</taxon>
        <taxon>Mycobacterium tuberculosis complex</taxon>
    </lineage>
</organism>
<protein>
    <recommendedName>
        <fullName evidence="1">4-hydroxy-2-oxohexanoate aldolase</fullName>
        <ecNumber evidence="1">4.1.3.43</ecNumber>
    </recommendedName>
    <alternativeName>
        <fullName evidence="2">4-hydroxy-2-keto-pentanoic acid aldolase</fullName>
    </alternativeName>
    <alternativeName>
        <fullName evidence="2">4-hydroxy-2-oxopentanoate aldolase</fullName>
    </alternativeName>
    <alternativeName>
        <fullName evidence="2">4-hydroxy-2-oxovalerate aldolase</fullName>
        <shortName evidence="2">HOA</shortName>
        <ecNumber evidence="2">4.1.3.39</ecNumber>
    </alternativeName>
</protein>
<reference key="1">
    <citation type="journal article" date="2009" name="Vaccine">
        <title>Whole genome sequence analysis of Mycobacterium bovis bacillus Calmette-Guerin (BCG) Tokyo 172: a comparative study of BCG vaccine substrains.</title>
        <authorList>
            <person name="Seki M."/>
            <person name="Honda I."/>
            <person name="Fujita I."/>
            <person name="Yano I."/>
            <person name="Yamamoto S."/>
            <person name="Koyama A."/>
        </authorList>
    </citation>
    <scope>NUCLEOTIDE SEQUENCE [LARGE SCALE GENOMIC DNA]</scope>
    <source>
        <strain>BCG / Tokyo 172 / ATCC 35737 / TMC 1019</strain>
    </source>
</reference>
<keyword id="KW-0058">Aromatic hydrocarbons catabolism</keyword>
<keyword id="KW-0456">Lyase</keyword>
<keyword id="KW-0464">Manganese</keyword>
<keyword id="KW-0479">Metal-binding</keyword>
<feature type="chain" id="PRO_0000387849" description="4-hydroxy-2-oxohexanoate aldolase">
    <location>
        <begin position="1"/>
        <end position="346"/>
    </location>
</feature>
<feature type="domain" description="Pyruvate carboxyltransferase" evidence="2">
    <location>
        <begin position="7"/>
        <end position="259"/>
    </location>
</feature>
<feature type="active site" description="Proton acceptor" evidence="2">
    <location>
        <position position="19"/>
    </location>
</feature>
<feature type="binding site" evidence="2">
    <location>
        <begin position="15"/>
        <end position="16"/>
    </location>
    <ligand>
        <name>substrate</name>
    </ligand>
</feature>
<feature type="binding site" evidence="2">
    <location>
        <position position="16"/>
    </location>
    <ligand>
        <name>Mn(2+)</name>
        <dbReference type="ChEBI" id="CHEBI:29035"/>
    </ligand>
</feature>
<feature type="binding site" evidence="2">
    <location>
        <position position="169"/>
    </location>
    <ligand>
        <name>substrate</name>
    </ligand>
</feature>
<feature type="binding site" evidence="2">
    <location>
        <position position="198"/>
    </location>
    <ligand>
        <name>Mn(2+)</name>
        <dbReference type="ChEBI" id="CHEBI:29035"/>
    </ligand>
</feature>
<feature type="binding site" evidence="2">
    <location>
        <position position="198"/>
    </location>
    <ligand>
        <name>substrate</name>
    </ligand>
</feature>
<feature type="binding site" evidence="2">
    <location>
        <position position="200"/>
    </location>
    <ligand>
        <name>Mn(2+)</name>
        <dbReference type="ChEBI" id="CHEBI:29035"/>
    </ligand>
</feature>
<feature type="binding site" evidence="2">
    <location>
        <position position="289"/>
    </location>
    <ligand>
        <name>substrate</name>
    </ligand>
</feature>
<feature type="site" description="Transition state stabilizer" evidence="2">
    <location>
        <position position="15"/>
    </location>
</feature>
<comment type="function">
    <text evidence="1">Involved in cholesterol degradation. Catalyzes the retro-aldol cleavage of 4-hydroxy-2-oxohexanoate (HOHA) to pyruvate and propanal. Can also catalyze the cleavage of 4-hydroxy-2-oxopentanoate (HOPA) to pyruvate and acetaldehyde. The aldehydes produced by this reaction are directly channeled to the dehydrogenase HsaG.</text>
</comment>
<comment type="catalytic activity">
    <reaction evidence="1">
        <text>(S)-4-hydroxy-2-oxohexanoate = propanal + pyruvate</text>
        <dbReference type="Rhea" id="RHEA:36003"/>
        <dbReference type="ChEBI" id="CHEBI:15361"/>
        <dbReference type="ChEBI" id="CHEBI:17153"/>
        <dbReference type="ChEBI" id="CHEBI:73142"/>
        <dbReference type="EC" id="4.1.3.43"/>
    </reaction>
    <physiologicalReaction direction="left-to-right" evidence="1">
        <dbReference type="Rhea" id="RHEA:36004"/>
    </physiologicalReaction>
</comment>
<comment type="catalytic activity">
    <reaction evidence="2">
        <text>(S)-4-hydroxy-2-oxopentanoate = acetaldehyde + pyruvate</text>
        <dbReference type="Rhea" id="RHEA:22624"/>
        <dbReference type="ChEBI" id="CHEBI:15343"/>
        <dbReference type="ChEBI" id="CHEBI:15361"/>
        <dbReference type="ChEBI" id="CHEBI:73143"/>
        <dbReference type="EC" id="4.1.3.39"/>
    </reaction>
    <physiologicalReaction direction="left-to-right" evidence="1">
        <dbReference type="Rhea" id="RHEA:22625"/>
    </physiologicalReaction>
</comment>
<comment type="cofactor">
    <cofactor evidence="1">
        <name>Mn(2+)</name>
        <dbReference type="ChEBI" id="CHEBI:29035"/>
    </cofactor>
</comment>
<comment type="subunit">
    <text evidence="1">Homodimer. Forms a heterotetramer composed of two aldolase (HsaF) and two dehydrogenase (HsaG) subunits.</text>
</comment>
<comment type="similarity">
    <text evidence="2">Belongs to the 4-hydroxy-2-oxovalerate aldolase family.</text>
</comment>
<accession>C1AHZ2</accession>
<name>HOA_MYCBT</name>
<proteinExistence type="inferred from homology"/>